<proteinExistence type="inferred from homology"/>
<sequence length="380" mass="42390">MKEKEKIIVAMSGGVDSAVAAGLLMEAGYDVIGVNLRTWEYEAPACDTTKKSCCSPEDIRDARDVGLSLNIPFYVIKMEKVFGERVIDRFISDYKDGRTPNPCVECNTFVKFGALFEQAKKLGIDKIATGHYARVIEVDGRYAIRNAVDMKKNQTYYLYGLSQDNIKNTVFPLGEMDKSEVREIAKRMGLPVAEKPESQEICFIPENDYRSFLKKKGMEFTPGFFKLASGQIIGKHQGKEGFTIGQRKGLGIAWKNPLYVLSIEDDGTVVLGEEEETVSESFVLEEITYQALAPLALGQSMEMKVQIRYRSAPVHCKVTSLGETWKVNFLEDVKSVTPGQSATFYPTNGDYLFAGGIIQKGSITRKIKSNVEVQRESVPI</sequence>
<comment type="function">
    <text evidence="1">Catalyzes the 2-thiolation of uridine at the wobble position (U34) of tRNA, leading to the formation of s(2)U34.</text>
</comment>
<comment type="catalytic activity">
    <reaction evidence="1">
        <text>S-sulfanyl-L-cysteinyl-[protein] + uridine(34) in tRNA + AH2 + ATP = 2-thiouridine(34) in tRNA + L-cysteinyl-[protein] + A + AMP + diphosphate + H(+)</text>
        <dbReference type="Rhea" id="RHEA:47032"/>
        <dbReference type="Rhea" id="RHEA-COMP:10131"/>
        <dbReference type="Rhea" id="RHEA-COMP:11726"/>
        <dbReference type="Rhea" id="RHEA-COMP:11727"/>
        <dbReference type="Rhea" id="RHEA-COMP:11728"/>
        <dbReference type="ChEBI" id="CHEBI:13193"/>
        <dbReference type="ChEBI" id="CHEBI:15378"/>
        <dbReference type="ChEBI" id="CHEBI:17499"/>
        <dbReference type="ChEBI" id="CHEBI:29950"/>
        <dbReference type="ChEBI" id="CHEBI:30616"/>
        <dbReference type="ChEBI" id="CHEBI:33019"/>
        <dbReference type="ChEBI" id="CHEBI:61963"/>
        <dbReference type="ChEBI" id="CHEBI:65315"/>
        <dbReference type="ChEBI" id="CHEBI:87170"/>
        <dbReference type="ChEBI" id="CHEBI:456215"/>
        <dbReference type="EC" id="2.8.1.13"/>
    </reaction>
</comment>
<comment type="subcellular location">
    <subcellularLocation>
        <location evidence="1">Cytoplasm</location>
    </subcellularLocation>
</comment>
<comment type="similarity">
    <text evidence="1">Belongs to the MnmA/TRMU family.</text>
</comment>
<reference key="1">
    <citation type="journal article" date="2008" name="PLoS ONE">
        <title>Genome sequence of the saprophyte Leptospira biflexa provides insights into the evolution of Leptospira and the pathogenesis of leptospirosis.</title>
        <authorList>
            <person name="Picardeau M."/>
            <person name="Bulach D.M."/>
            <person name="Bouchier C."/>
            <person name="Zuerner R.L."/>
            <person name="Zidane N."/>
            <person name="Wilson P.J."/>
            <person name="Creno S."/>
            <person name="Kuczek E.S."/>
            <person name="Bommezzadri S."/>
            <person name="Davis J.C."/>
            <person name="McGrath A."/>
            <person name="Johnson M.J."/>
            <person name="Boursaux-Eude C."/>
            <person name="Seemann T."/>
            <person name="Rouy Z."/>
            <person name="Coppel R.L."/>
            <person name="Rood J.I."/>
            <person name="Lajus A."/>
            <person name="Davies J.K."/>
            <person name="Medigue C."/>
            <person name="Adler B."/>
        </authorList>
    </citation>
    <scope>NUCLEOTIDE SEQUENCE [LARGE SCALE GENOMIC DNA]</scope>
    <source>
        <strain>Patoc 1 / Ames</strain>
    </source>
</reference>
<organism>
    <name type="scientific">Leptospira biflexa serovar Patoc (strain Patoc 1 / Ames)</name>
    <dbReference type="NCBI Taxonomy" id="355278"/>
    <lineage>
        <taxon>Bacteria</taxon>
        <taxon>Pseudomonadati</taxon>
        <taxon>Spirochaetota</taxon>
        <taxon>Spirochaetia</taxon>
        <taxon>Leptospirales</taxon>
        <taxon>Leptospiraceae</taxon>
        <taxon>Leptospira</taxon>
    </lineage>
</organism>
<keyword id="KW-0067">ATP-binding</keyword>
<keyword id="KW-0963">Cytoplasm</keyword>
<keyword id="KW-1015">Disulfide bond</keyword>
<keyword id="KW-0547">Nucleotide-binding</keyword>
<keyword id="KW-0694">RNA-binding</keyword>
<keyword id="KW-0808">Transferase</keyword>
<keyword id="KW-0819">tRNA processing</keyword>
<keyword id="KW-0820">tRNA-binding</keyword>
<feature type="chain" id="PRO_0000349682" description="tRNA-specific 2-thiouridylase MnmA">
    <location>
        <begin position="1"/>
        <end position="380"/>
    </location>
</feature>
<feature type="region of interest" description="Interaction with tRNA" evidence="1">
    <location>
        <begin position="152"/>
        <end position="154"/>
    </location>
</feature>
<feature type="region of interest" description="Interaction with tRNA" evidence="1">
    <location>
        <begin position="308"/>
        <end position="309"/>
    </location>
</feature>
<feature type="active site" description="Nucleophile" evidence="1">
    <location>
        <position position="106"/>
    </location>
</feature>
<feature type="active site" description="Cysteine persulfide intermediate" evidence="1">
    <location>
        <position position="202"/>
    </location>
</feature>
<feature type="binding site" evidence="1">
    <location>
        <begin position="10"/>
        <end position="17"/>
    </location>
    <ligand>
        <name>ATP</name>
        <dbReference type="ChEBI" id="CHEBI:30616"/>
    </ligand>
</feature>
<feature type="binding site" evidence="1">
    <location>
        <position position="36"/>
    </location>
    <ligand>
        <name>ATP</name>
        <dbReference type="ChEBI" id="CHEBI:30616"/>
    </ligand>
</feature>
<feature type="binding site" evidence="1">
    <location>
        <position position="130"/>
    </location>
    <ligand>
        <name>ATP</name>
        <dbReference type="ChEBI" id="CHEBI:30616"/>
    </ligand>
</feature>
<feature type="site" description="Interaction with tRNA" evidence="1">
    <location>
        <position position="131"/>
    </location>
</feature>
<feature type="site" description="Interaction with tRNA" evidence="1">
    <location>
        <position position="340"/>
    </location>
</feature>
<feature type="disulfide bond" description="Alternate" evidence="1">
    <location>
        <begin position="106"/>
        <end position="202"/>
    </location>
</feature>
<name>MNMA_LEPBA</name>
<gene>
    <name evidence="1" type="primary">mnmA</name>
    <name type="ordered locus">LBF_1287</name>
</gene>
<evidence type="ECO:0000255" key="1">
    <source>
        <dbReference type="HAMAP-Rule" id="MF_00144"/>
    </source>
</evidence>
<accession>B0SG84</accession>
<protein>
    <recommendedName>
        <fullName evidence="1">tRNA-specific 2-thiouridylase MnmA</fullName>
        <ecNumber evidence="1">2.8.1.13</ecNumber>
    </recommendedName>
</protein>
<dbReference type="EC" id="2.8.1.13" evidence="1"/>
<dbReference type="EMBL" id="CP000777">
    <property type="protein sequence ID" value="ABZ93808.1"/>
    <property type="molecule type" value="Genomic_DNA"/>
</dbReference>
<dbReference type="RefSeq" id="WP_012388331.1">
    <property type="nucleotide sequence ID" value="NC_010842.1"/>
</dbReference>
<dbReference type="SMR" id="B0SG84"/>
<dbReference type="KEGG" id="lbf:LBF_1287"/>
<dbReference type="HOGENOM" id="CLU_035188_0_0_12"/>
<dbReference type="GO" id="GO:0005737">
    <property type="term" value="C:cytoplasm"/>
    <property type="evidence" value="ECO:0007669"/>
    <property type="project" value="UniProtKB-SubCell"/>
</dbReference>
<dbReference type="GO" id="GO:0005524">
    <property type="term" value="F:ATP binding"/>
    <property type="evidence" value="ECO:0007669"/>
    <property type="project" value="UniProtKB-KW"/>
</dbReference>
<dbReference type="GO" id="GO:0000049">
    <property type="term" value="F:tRNA binding"/>
    <property type="evidence" value="ECO:0007669"/>
    <property type="project" value="UniProtKB-KW"/>
</dbReference>
<dbReference type="GO" id="GO:0103016">
    <property type="term" value="F:tRNA-uridine 2-sulfurtransferase activity"/>
    <property type="evidence" value="ECO:0007669"/>
    <property type="project" value="UniProtKB-EC"/>
</dbReference>
<dbReference type="GO" id="GO:0002143">
    <property type="term" value="P:tRNA wobble position uridine thiolation"/>
    <property type="evidence" value="ECO:0007669"/>
    <property type="project" value="TreeGrafter"/>
</dbReference>
<dbReference type="CDD" id="cd01998">
    <property type="entry name" value="MnmA_TRMU-like"/>
    <property type="match status" value="1"/>
</dbReference>
<dbReference type="FunFam" id="3.40.50.620:FF:000115">
    <property type="entry name" value="tRNA-specific 2-thiouridylase MnmA"/>
    <property type="match status" value="1"/>
</dbReference>
<dbReference type="Gene3D" id="2.30.30.280">
    <property type="entry name" value="Adenine nucleotide alpha hydrolases-like domains"/>
    <property type="match status" value="1"/>
</dbReference>
<dbReference type="Gene3D" id="3.40.50.620">
    <property type="entry name" value="HUPs"/>
    <property type="match status" value="1"/>
</dbReference>
<dbReference type="Gene3D" id="2.40.30.10">
    <property type="entry name" value="Translation factors"/>
    <property type="match status" value="1"/>
</dbReference>
<dbReference type="HAMAP" id="MF_00144">
    <property type="entry name" value="tRNA_thiouridyl_MnmA"/>
    <property type="match status" value="1"/>
</dbReference>
<dbReference type="InterPro" id="IPR004506">
    <property type="entry name" value="MnmA-like"/>
</dbReference>
<dbReference type="InterPro" id="IPR046885">
    <property type="entry name" value="MnmA-like_C"/>
</dbReference>
<dbReference type="InterPro" id="IPR046884">
    <property type="entry name" value="MnmA-like_central"/>
</dbReference>
<dbReference type="InterPro" id="IPR023382">
    <property type="entry name" value="MnmA-like_central_sf"/>
</dbReference>
<dbReference type="InterPro" id="IPR014729">
    <property type="entry name" value="Rossmann-like_a/b/a_fold"/>
</dbReference>
<dbReference type="NCBIfam" id="NF001138">
    <property type="entry name" value="PRK00143.1"/>
    <property type="match status" value="1"/>
</dbReference>
<dbReference type="NCBIfam" id="TIGR00420">
    <property type="entry name" value="trmU"/>
    <property type="match status" value="1"/>
</dbReference>
<dbReference type="PANTHER" id="PTHR11933:SF5">
    <property type="entry name" value="MITOCHONDRIAL TRNA-SPECIFIC 2-THIOURIDYLASE 1"/>
    <property type="match status" value="1"/>
</dbReference>
<dbReference type="PANTHER" id="PTHR11933">
    <property type="entry name" value="TRNA 5-METHYLAMINOMETHYL-2-THIOURIDYLATE -METHYLTRANSFERASE"/>
    <property type="match status" value="1"/>
</dbReference>
<dbReference type="Pfam" id="PF03054">
    <property type="entry name" value="tRNA_Me_trans"/>
    <property type="match status" value="1"/>
</dbReference>
<dbReference type="Pfam" id="PF20258">
    <property type="entry name" value="tRNA_Me_trans_C"/>
    <property type="match status" value="1"/>
</dbReference>
<dbReference type="Pfam" id="PF20259">
    <property type="entry name" value="tRNA_Me_trans_M"/>
    <property type="match status" value="1"/>
</dbReference>
<dbReference type="SUPFAM" id="SSF52402">
    <property type="entry name" value="Adenine nucleotide alpha hydrolases-like"/>
    <property type="match status" value="1"/>
</dbReference>